<gene>
    <name type="primary">JIP5</name>
    <name type="ordered locus">KLLA0B10736g</name>
</gene>
<sequence>MGKNTKAKKRAASLEVLASKSSPILEFVFDEPLIHVACHPEQPIVVCAIATGHVFCCKYDAKALKRILNKNEAKLAALENKDDQKRKRFWKLIKLKAEMDTYELEEGEETAAVELLWKTRRHKGSVRGMSFNNDGSKLYTIGIDNVLKKANSLTGKVMKKVTLPLSSEKNHYTKLVTSKTHPFLLLGDELGNIHVLNNDTLQLQNTIKSIHNGDAINDIFQFVGKSVYKFISLGQTTLAYWDSRESNESDASIPADDLDAKRKVYVSDDQEDEMICGSFVNPEDGDILVCGMGEGVLTVWKPKKNDLVDQVTRIPICKNESVDCVISSFQDDNCVYCGCSNGNVYKVNVKLGKVIEIRKHSSIDEVSFIDLDYEYRVLSAGMDKVKLWDIVDEDDDEEGKINESYSNSESDNDNGFDSDADSNSDSESVSSSDVDSASDDEENSKSESEANESDVEETLVGLSKDELLAELEKDLQSSDEDSKHYTKRTKSTQPKKLKKQKKELNNKQLRNLQKHEHGIRKFEGL</sequence>
<organism>
    <name type="scientific">Kluyveromyces lactis (strain ATCC 8585 / CBS 2359 / DSM 70799 / NBRC 1267 / NRRL Y-1140 / WM37)</name>
    <name type="common">Yeast</name>
    <name type="synonym">Candida sphaerica</name>
    <dbReference type="NCBI Taxonomy" id="284590"/>
    <lineage>
        <taxon>Eukaryota</taxon>
        <taxon>Fungi</taxon>
        <taxon>Dikarya</taxon>
        <taxon>Ascomycota</taxon>
        <taxon>Saccharomycotina</taxon>
        <taxon>Saccharomycetes</taxon>
        <taxon>Saccharomycetales</taxon>
        <taxon>Saccharomycetaceae</taxon>
        <taxon>Kluyveromyces</taxon>
    </lineage>
</organism>
<protein>
    <recommendedName>
        <fullName>WD repeat-containing protein JIP5</fullName>
    </recommendedName>
</protein>
<evidence type="ECO:0000250" key="1"/>
<evidence type="ECO:0000256" key="2">
    <source>
        <dbReference type="SAM" id="MobiDB-lite"/>
    </source>
</evidence>
<evidence type="ECO:0000305" key="3"/>
<proteinExistence type="inferred from homology"/>
<accession>Q6CVN2</accession>
<reference key="1">
    <citation type="journal article" date="2004" name="Nature">
        <title>Genome evolution in yeasts.</title>
        <authorList>
            <person name="Dujon B."/>
            <person name="Sherman D."/>
            <person name="Fischer G."/>
            <person name="Durrens P."/>
            <person name="Casaregola S."/>
            <person name="Lafontaine I."/>
            <person name="de Montigny J."/>
            <person name="Marck C."/>
            <person name="Neuveglise C."/>
            <person name="Talla E."/>
            <person name="Goffard N."/>
            <person name="Frangeul L."/>
            <person name="Aigle M."/>
            <person name="Anthouard V."/>
            <person name="Babour A."/>
            <person name="Barbe V."/>
            <person name="Barnay S."/>
            <person name="Blanchin S."/>
            <person name="Beckerich J.-M."/>
            <person name="Beyne E."/>
            <person name="Bleykasten C."/>
            <person name="Boisrame A."/>
            <person name="Boyer J."/>
            <person name="Cattolico L."/>
            <person name="Confanioleri F."/>
            <person name="de Daruvar A."/>
            <person name="Despons L."/>
            <person name="Fabre E."/>
            <person name="Fairhead C."/>
            <person name="Ferry-Dumazet H."/>
            <person name="Groppi A."/>
            <person name="Hantraye F."/>
            <person name="Hennequin C."/>
            <person name="Jauniaux N."/>
            <person name="Joyet P."/>
            <person name="Kachouri R."/>
            <person name="Kerrest A."/>
            <person name="Koszul R."/>
            <person name="Lemaire M."/>
            <person name="Lesur I."/>
            <person name="Ma L."/>
            <person name="Muller H."/>
            <person name="Nicaud J.-M."/>
            <person name="Nikolski M."/>
            <person name="Oztas S."/>
            <person name="Ozier-Kalogeropoulos O."/>
            <person name="Pellenz S."/>
            <person name="Potier S."/>
            <person name="Richard G.-F."/>
            <person name="Straub M.-L."/>
            <person name="Suleau A."/>
            <person name="Swennen D."/>
            <person name="Tekaia F."/>
            <person name="Wesolowski-Louvel M."/>
            <person name="Westhof E."/>
            <person name="Wirth B."/>
            <person name="Zeniou-Meyer M."/>
            <person name="Zivanovic Y."/>
            <person name="Bolotin-Fukuhara M."/>
            <person name="Thierry A."/>
            <person name="Bouchier C."/>
            <person name="Caudron B."/>
            <person name="Scarpelli C."/>
            <person name="Gaillardin C."/>
            <person name="Weissenbach J."/>
            <person name="Wincker P."/>
            <person name="Souciet J.-L."/>
        </authorList>
    </citation>
    <scope>NUCLEOTIDE SEQUENCE [LARGE SCALE GENOMIC DNA]</scope>
    <source>
        <strain>ATCC 8585 / CBS 2359 / DSM 70799 / NBRC 1267 / NRRL Y-1140 / WM37</strain>
    </source>
</reference>
<name>JIP5_KLULA</name>
<feature type="chain" id="PRO_0000333560" description="WD repeat-containing protein JIP5">
    <location>
        <begin position="1"/>
        <end position="525"/>
    </location>
</feature>
<feature type="repeat" description="WD 1">
    <location>
        <begin position="28"/>
        <end position="69"/>
    </location>
</feature>
<feature type="repeat" description="WD 2">
    <location>
        <begin position="121"/>
        <end position="160"/>
    </location>
</feature>
<feature type="repeat" description="WD 3">
    <location>
        <begin position="211"/>
        <end position="251"/>
    </location>
</feature>
<feature type="repeat" description="WD 4">
    <location>
        <begin position="270"/>
        <end position="310"/>
    </location>
</feature>
<feature type="repeat" description="WD 5">
    <location>
        <begin position="358"/>
        <end position="398"/>
    </location>
</feature>
<feature type="region of interest" description="Disordered" evidence="2">
    <location>
        <begin position="396"/>
        <end position="525"/>
    </location>
</feature>
<feature type="compositionally biased region" description="Acidic residues" evidence="2">
    <location>
        <begin position="410"/>
        <end position="424"/>
    </location>
</feature>
<feature type="compositionally biased region" description="Low complexity" evidence="2">
    <location>
        <begin position="425"/>
        <end position="435"/>
    </location>
</feature>
<feature type="compositionally biased region" description="Basic and acidic residues" evidence="2">
    <location>
        <begin position="463"/>
        <end position="484"/>
    </location>
</feature>
<feature type="compositionally biased region" description="Basic residues" evidence="2">
    <location>
        <begin position="485"/>
        <end position="501"/>
    </location>
</feature>
<feature type="compositionally biased region" description="Basic and acidic residues" evidence="2">
    <location>
        <begin position="513"/>
        <end position="525"/>
    </location>
</feature>
<dbReference type="EMBL" id="CR382122">
    <property type="protein sequence ID" value="CAH02400.1"/>
    <property type="molecule type" value="Genomic_DNA"/>
</dbReference>
<dbReference type="RefSeq" id="XP_452007.1">
    <property type="nucleotide sequence ID" value="XM_452007.1"/>
</dbReference>
<dbReference type="SMR" id="Q6CVN2"/>
<dbReference type="FunCoup" id="Q6CVN2">
    <property type="interactions" value="130"/>
</dbReference>
<dbReference type="STRING" id="284590.Q6CVN2"/>
<dbReference type="PaxDb" id="284590-Q6CVN2"/>
<dbReference type="KEGG" id="kla:KLLA0_B10736g"/>
<dbReference type="eggNOG" id="KOG2444">
    <property type="taxonomic scope" value="Eukaryota"/>
</dbReference>
<dbReference type="HOGENOM" id="CLU_035623_0_0_1"/>
<dbReference type="InParanoid" id="Q6CVN2"/>
<dbReference type="OMA" id="DDNCIWC"/>
<dbReference type="Proteomes" id="UP000000598">
    <property type="component" value="Chromosome B"/>
</dbReference>
<dbReference type="GO" id="GO:0005730">
    <property type="term" value="C:nucleolus"/>
    <property type="evidence" value="ECO:0007669"/>
    <property type="project" value="UniProtKB-SubCell"/>
</dbReference>
<dbReference type="GO" id="GO:0045943">
    <property type="term" value="P:positive regulation of transcription by RNA polymerase I"/>
    <property type="evidence" value="ECO:0007669"/>
    <property type="project" value="TreeGrafter"/>
</dbReference>
<dbReference type="GO" id="GO:0006364">
    <property type="term" value="P:rRNA processing"/>
    <property type="evidence" value="ECO:0007669"/>
    <property type="project" value="TreeGrafter"/>
</dbReference>
<dbReference type="Gene3D" id="2.130.10.10">
    <property type="entry name" value="YVTN repeat-like/Quinoprotein amine dehydrogenase"/>
    <property type="match status" value="2"/>
</dbReference>
<dbReference type="InterPro" id="IPR015943">
    <property type="entry name" value="WD40/YVTN_repeat-like_dom_sf"/>
</dbReference>
<dbReference type="InterPro" id="IPR036322">
    <property type="entry name" value="WD40_repeat_dom_sf"/>
</dbReference>
<dbReference type="InterPro" id="IPR001680">
    <property type="entry name" value="WD40_rpt"/>
</dbReference>
<dbReference type="PANTHER" id="PTHR19924">
    <property type="entry name" value="UTP15 U3 SMALL NUCLEOLAR RNA-ASSOCIATED PROTEIN 15 FAMILY MEMBER"/>
    <property type="match status" value="1"/>
</dbReference>
<dbReference type="PANTHER" id="PTHR19924:SF31">
    <property type="entry name" value="WD REPEAT-CONTAINING PROTEIN JIP5"/>
    <property type="match status" value="1"/>
</dbReference>
<dbReference type="SMART" id="SM00320">
    <property type="entry name" value="WD40"/>
    <property type="match status" value="2"/>
</dbReference>
<dbReference type="SUPFAM" id="SSF50978">
    <property type="entry name" value="WD40 repeat-like"/>
    <property type="match status" value="1"/>
</dbReference>
<keyword id="KW-0539">Nucleus</keyword>
<keyword id="KW-1185">Reference proteome</keyword>
<keyword id="KW-0677">Repeat</keyword>
<keyword id="KW-0853">WD repeat</keyword>
<comment type="subcellular location">
    <subcellularLocation>
        <location evidence="1">Nucleus</location>
        <location evidence="1">Nucleolus</location>
    </subcellularLocation>
</comment>
<comment type="similarity">
    <text evidence="3">Belongs to the WD repeat WDR55 family.</text>
</comment>